<sequence length="137" mass="16207">MEVNYFNQYKEETTQFEVILETVFKDIKEEKSMQVIFVDNDQIRDINKMYRNIDKPTDVISFPNDDEKDDSLGDIFISIDQAKIQALDYGHTLEREIGFLAVHGYLHLLGYDHHTEAEEKEMFTLQEEILNKANLKR</sequence>
<protein>
    <recommendedName>
        <fullName evidence="1">Endoribonuclease YbeY</fullName>
        <ecNumber evidence="1">3.1.-.-</ecNumber>
    </recommendedName>
</protein>
<feature type="chain" id="PRO_0000336007" description="Endoribonuclease YbeY">
    <location>
        <begin position="1"/>
        <end position="137"/>
    </location>
</feature>
<feature type="binding site" evidence="1">
    <location>
        <position position="103"/>
    </location>
    <ligand>
        <name>Zn(2+)</name>
        <dbReference type="ChEBI" id="CHEBI:29105"/>
        <note>catalytic</note>
    </ligand>
</feature>
<feature type="binding site" evidence="1">
    <location>
        <position position="107"/>
    </location>
    <ligand>
        <name>Zn(2+)</name>
        <dbReference type="ChEBI" id="CHEBI:29105"/>
        <note>catalytic</note>
    </ligand>
</feature>
<feature type="binding site" evidence="1">
    <location>
        <position position="113"/>
    </location>
    <ligand>
        <name>Zn(2+)</name>
        <dbReference type="ChEBI" id="CHEBI:29105"/>
        <note>catalytic</note>
    </ligand>
</feature>
<name>YBEY_ACHLI</name>
<accession>A9NGT0</accession>
<keyword id="KW-0963">Cytoplasm</keyword>
<keyword id="KW-0255">Endonuclease</keyword>
<keyword id="KW-0378">Hydrolase</keyword>
<keyword id="KW-0479">Metal-binding</keyword>
<keyword id="KW-0540">Nuclease</keyword>
<keyword id="KW-1185">Reference proteome</keyword>
<keyword id="KW-0690">Ribosome biogenesis</keyword>
<keyword id="KW-0698">rRNA processing</keyword>
<keyword id="KW-0862">Zinc</keyword>
<comment type="function">
    <text evidence="1">Single strand-specific metallo-endoribonuclease involved in late-stage 70S ribosome quality control and in maturation of the 3' terminus of the 16S rRNA.</text>
</comment>
<comment type="cofactor">
    <cofactor evidence="1">
        <name>Zn(2+)</name>
        <dbReference type="ChEBI" id="CHEBI:29105"/>
    </cofactor>
    <text evidence="1">Binds 1 zinc ion.</text>
</comment>
<comment type="subcellular location">
    <subcellularLocation>
        <location evidence="1">Cytoplasm</location>
    </subcellularLocation>
</comment>
<comment type="similarity">
    <text evidence="1">Belongs to the endoribonuclease YbeY family.</text>
</comment>
<organism>
    <name type="scientific">Acholeplasma laidlawii (strain PG-8A)</name>
    <dbReference type="NCBI Taxonomy" id="441768"/>
    <lineage>
        <taxon>Bacteria</taxon>
        <taxon>Bacillati</taxon>
        <taxon>Mycoplasmatota</taxon>
        <taxon>Mollicutes</taxon>
        <taxon>Acholeplasmatales</taxon>
        <taxon>Acholeplasmataceae</taxon>
        <taxon>Acholeplasma</taxon>
    </lineage>
</organism>
<gene>
    <name evidence="1" type="primary">ybeY</name>
    <name type="ordered locus">ACL_0950</name>
</gene>
<evidence type="ECO:0000255" key="1">
    <source>
        <dbReference type="HAMAP-Rule" id="MF_00009"/>
    </source>
</evidence>
<dbReference type="EC" id="3.1.-.-" evidence="1"/>
<dbReference type="EMBL" id="CP000896">
    <property type="protein sequence ID" value="ABX81560.1"/>
    <property type="molecule type" value="Genomic_DNA"/>
</dbReference>
<dbReference type="RefSeq" id="WP_012242891.1">
    <property type="nucleotide sequence ID" value="NC_010163.1"/>
</dbReference>
<dbReference type="SMR" id="A9NGT0"/>
<dbReference type="STRING" id="441768.ACL_0950"/>
<dbReference type="GeneID" id="41339098"/>
<dbReference type="KEGG" id="acl:ACL_0950"/>
<dbReference type="eggNOG" id="COG0319">
    <property type="taxonomic scope" value="Bacteria"/>
</dbReference>
<dbReference type="HOGENOM" id="CLU_106710_3_0_14"/>
<dbReference type="OrthoDB" id="9807740at2"/>
<dbReference type="Proteomes" id="UP000008558">
    <property type="component" value="Chromosome"/>
</dbReference>
<dbReference type="GO" id="GO:0005737">
    <property type="term" value="C:cytoplasm"/>
    <property type="evidence" value="ECO:0007669"/>
    <property type="project" value="UniProtKB-SubCell"/>
</dbReference>
<dbReference type="GO" id="GO:0004222">
    <property type="term" value="F:metalloendopeptidase activity"/>
    <property type="evidence" value="ECO:0007669"/>
    <property type="project" value="InterPro"/>
</dbReference>
<dbReference type="GO" id="GO:0004521">
    <property type="term" value="F:RNA endonuclease activity"/>
    <property type="evidence" value="ECO:0007669"/>
    <property type="project" value="UniProtKB-UniRule"/>
</dbReference>
<dbReference type="GO" id="GO:0008270">
    <property type="term" value="F:zinc ion binding"/>
    <property type="evidence" value="ECO:0007669"/>
    <property type="project" value="UniProtKB-UniRule"/>
</dbReference>
<dbReference type="GO" id="GO:0006364">
    <property type="term" value="P:rRNA processing"/>
    <property type="evidence" value="ECO:0007669"/>
    <property type="project" value="UniProtKB-UniRule"/>
</dbReference>
<dbReference type="Gene3D" id="3.40.390.30">
    <property type="entry name" value="Metalloproteases ('zincins'), catalytic domain"/>
    <property type="match status" value="1"/>
</dbReference>
<dbReference type="HAMAP" id="MF_00009">
    <property type="entry name" value="Endoribonucl_YbeY"/>
    <property type="match status" value="1"/>
</dbReference>
<dbReference type="InterPro" id="IPR023091">
    <property type="entry name" value="MetalPrtase_cat_dom_sf_prd"/>
</dbReference>
<dbReference type="InterPro" id="IPR002036">
    <property type="entry name" value="YbeY"/>
</dbReference>
<dbReference type="InterPro" id="IPR020549">
    <property type="entry name" value="YbeY_CS"/>
</dbReference>
<dbReference type="NCBIfam" id="TIGR00043">
    <property type="entry name" value="rRNA maturation RNase YbeY"/>
    <property type="match status" value="1"/>
</dbReference>
<dbReference type="PANTHER" id="PTHR46986">
    <property type="entry name" value="ENDORIBONUCLEASE YBEY, CHLOROPLASTIC"/>
    <property type="match status" value="1"/>
</dbReference>
<dbReference type="PANTHER" id="PTHR46986:SF1">
    <property type="entry name" value="ENDORIBONUCLEASE YBEY, CHLOROPLASTIC"/>
    <property type="match status" value="1"/>
</dbReference>
<dbReference type="Pfam" id="PF02130">
    <property type="entry name" value="YbeY"/>
    <property type="match status" value="1"/>
</dbReference>
<dbReference type="SUPFAM" id="SSF55486">
    <property type="entry name" value="Metalloproteases ('zincins'), catalytic domain"/>
    <property type="match status" value="1"/>
</dbReference>
<dbReference type="PROSITE" id="PS01306">
    <property type="entry name" value="UPF0054"/>
    <property type="match status" value="1"/>
</dbReference>
<reference key="1">
    <citation type="journal article" date="2011" name="J. Bacteriol.">
        <title>Complete genome and proteome of Acholeplasma laidlawii.</title>
        <authorList>
            <person name="Lazarev V.N."/>
            <person name="Levitskii S.A."/>
            <person name="Basovskii Y.I."/>
            <person name="Chukin M.M."/>
            <person name="Akopian T.A."/>
            <person name="Vereshchagin V.V."/>
            <person name="Kostrjukova E.S."/>
            <person name="Kovaleva G.Y."/>
            <person name="Kazanov M.D."/>
            <person name="Malko D.B."/>
            <person name="Vitreschak A.G."/>
            <person name="Sernova N.V."/>
            <person name="Gelfand M.S."/>
            <person name="Demina I.A."/>
            <person name="Serebryakova M.V."/>
            <person name="Galyamina M.A."/>
            <person name="Vtyurin N.N."/>
            <person name="Rogov S.I."/>
            <person name="Alexeev D.G."/>
            <person name="Ladygina V.G."/>
            <person name="Govorun V.M."/>
        </authorList>
    </citation>
    <scope>NUCLEOTIDE SEQUENCE [LARGE SCALE GENOMIC DNA]</scope>
    <source>
        <strain>PG-8A</strain>
    </source>
</reference>
<proteinExistence type="inferred from homology"/>